<proteinExistence type="inferred from homology"/>
<feature type="chain" id="PRO_1000059724" description="Exodeoxyribonuclease 7 small subunit">
    <location>
        <begin position="1"/>
        <end position="79"/>
    </location>
</feature>
<evidence type="ECO:0000255" key="1">
    <source>
        <dbReference type="HAMAP-Rule" id="MF_00337"/>
    </source>
</evidence>
<organism>
    <name type="scientific">Syntrophus aciditrophicus (strain SB)</name>
    <dbReference type="NCBI Taxonomy" id="56780"/>
    <lineage>
        <taxon>Bacteria</taxon>
        <taxon>Pseudomonadati</taxon>
        <taxon>Thermodesulfobacteriota</taxon>
        <taxon>Syntrophia</taxon>
        <taxon>Syntrophales</taxon>
        <taxon>Syntrophaceae</taxon>
        <taxon>Syntrophus</taxon>
    </lineage>
</organism>
<accession>Q2LUA0</accession>
<dbReference type="EC" id="3.1.11.6" evidence="1"/>
<dbReference type="EMBL" id="CP000252">
    <property type="protein sequence ID" value="ABC77663.1"/>
    <property type="molecule type" value="Genomic_DNA"/>
</dbReference>
<dbReference type="RefSeq" id="WP_011417685.1">
    <property type="nucleotide sequence ID" value="NC_007759.1"/>
</dbReference>
<dbReference type="SMR" id="Q2LUA0"/>
<dbReference type="FunCoup" id="Q2LUA0">
    <property type="interactions" value="328"/>
</dbReference>
<dbReference type="STRING" id="56780.SYN_02458"/>
<dbReference type="KEGG" id="sat:SYN_02458"/>
<dbReference type="eggNOG" id="COG1722">
    <property type="taxonomic scope" value="Bacteria"/>
</dbReference>
<dbReference type="HOGENOM" id="CLU_145918_3_3_7"/>
<dbReference type="InParanoid" id="Q2LUA0"/>
<dbReference type="OrthoDB" id="5523157at2"/>
<dbReference type="Proteomes" id="UP000001933">
    <property type="component" value="Chromosome"/>
</dbReference>
<dbReference type="GO" id="GO:0005829">
    <property type="term" value="C:cytosol"/>
    <property type="evidence" value="ECO:0007669"/>
    <property type="project" value="TreeGrafter"/>
</dbReference>
<dbReference type="GO" id="GO:0009318">
    <property type="term" value="C:exodeoxyribonuclease VII complex"/>
    <property type="evidence" value="ECO:0007669"/>
    <property type="project" value="InterPro"/>
</dbReference>
<dbReference type="GO" id="GO:0008855">
    <property type="term" value="F:exodeoxyribonuclease VII activity"/>
    <property type="evidence" value="ECO:0007669"/>
    <property type="project" value="UniProtKB-UniRule"/>
</dbReference>
<dbReference type="GO" id="GO:0006308">
    <property type="term" value="P:DNA catabolic process"/>
    <property type="evidence" value="ECO:0007669"/>
    <property type="project" value="UniProtKB-UniRule"/>
</dbReference>
<dbReference type="Gene3D" id="1.10.287.1040">
    <property type="entry name" value="Exonuclease VII, small subunit"/>
    <property type="match status" value="1"/>
</dbReference>
<dbReference type="HAMAP" id="MF_00337">
    <property type="entry name" value="Exonuc_7_S"/>
    <property type="match status" value="1"/>
</dbReference>
<dbReference type="InterPro" id="IPR003761">
    <property type="entry name" value="Exonuc_VII_S"/>
</dbReference>
<dbReference type="InterPro" id="IPR037004">
    <property type="entry name" value="Exonuc_VII_ssu_sf"/>
</dbReference>
<dbReference type="NCBIfam" id="NF002140">
    <property type="entry name" value="PRK00977.1-4"/>
    <property type="match status" value="1"/>
</dbReference>
<dbReference type="NCBIfam" id="TIGR01280">
    <property type="entry name" value="xseB"/>
    <property type="match status" value="1"/>
</dbReference>
<dbReference type="PANTHER" id="PTHR34137">
    <property type="entry name" value="EXODEOXYRIBONUCLEASE 7 SMALL SUBUNIT"/>
    <property type="match status" value="1"/>
</dbReference>
<dbReference type="PANTHER" id="PTHR34137:SF1">
    <property type="entry name" value="EXODEOXYRIBONUCLEASE 7 SMALL SUBUNIT"/>
    <property type="match status" value="1"/>
</dbReference>
<dbReference type="Pfam" id="PF02609">
    <property type="entry name" value="Exonuc_VII_S"/>
    <property type="match status" value="1"/>
</dbReference>
<dbReference type="SUPFAM" id="SSF116842">
    <property type="entry name" value="XseB-like"/>
    <property type="match status" value="1"/>
</dbReference>
<sequence>MAKEKFEEAMAKLEALVRKMETGDMTLEESLKAFEEGIRLSRLCASRLDDAERRVEMLIAENSNVTVQPLRENGEKNES</sequence>
<name>EX7S_SYNAS</name>
<reference key="1">
    <citation type="journal article" date="2007" name="Proc. Natl. Acad. Sci. U.S.A.">
        <title>The genome of Syntrophus aciditrophicus: life at the thermodynamic limit of microbial growth.</title>
        <authorList>
            <person name="McInerney M.J."/>
            <person name="Rohlin L."/>
            <person name="Mouttaki H."/>
            <person name="Kim U."/>
            <person name="Krupp R.S."/>
            <person name="Rios-Hernandez L."/>
            <person name="Sieber J."/>
            <person name="Struchtemeyer C.G."/>
            <person name="Bhattacharyya A."/>
            <person name="Campbell J.W."/>
            <person name="Gunsalus R.P."/>
        </authorList>
    </citation>
    <scope>NUCLEOTIDE SEQUENCE [LARGE SCALE GENOMIC DNA]</scope>
    <source>
        <strain>SB</strain>
    </source>
</reference>
<comment type="function">
    <text evidence="1">Bidirectionally degrades single-stranded DNA into large acid-insoluble oligonucleotides, which are then degraded further into small acid-soluble oligonucleotides.</text>
</comment>
<comment type="catalytic activity">
    <reaction evidence="1">
        <text>Exonucleolytic cleavage in either 5'- to 3'- or 3'- to 5'-direction to yield nucleoside 5'-phosphates.</text>
        <dbReference type="EC" id="3.1.11.6"/>
    </reaction>
</comment>
<comment type="subunit">
    <text evidence="1">Heterooligomer composed of large and small subunits.</text>
</comment>
<comment type="subcellular location">
    <subcellularLocation>
        <location evidence="1">Cytoplasm</location>
    </subcellularLocation>
</comment>
<comment type="similarity">
    <text evidence="1">Belongs to the XseB family.</text>
</comment>
<protein>
    <recommendedName>
        <fullName evidence="1">Exodeoxyribonuclease 7 small subunit</fullName>
        <ecNumber evidence="1">3.1.11.6</ecNumber>
    </recommendedName>
    <alternativeName>
        <fullName evidence="1">Exodeoxyribonuclease VII small subunit</fullName>
        <shortName evidence="1">Exonuclease VII small subunit</shortName>
    </alternativeName>
</protein>
<gene>
    <name evidence="1" type="primary">xseB</name>
    <name type="ordered locus">SYNAS_17840</name>
    <name type="ORF">SYN_02458</name>
</gene>
<keyword id="KW-0963">Cytoplasm</keyword>
<keyword id="KW-0269">Exonuclease</keyword>
<keyword id="KW-0378">Hydrolase</keyword>
<keyword id="KW-0540">Nuclease</keyword>
<keyword id="KW-1185">Reference proteome</keyword>